<protein>
    <recommendedName>
        <fullName evidence="1">Dihydroorotase</fullName>
        <shortName evidence="1">DHOase</shortName>
        <ecNumber evidence="1">3.5.2.3</ecNumber>
    </recommendedName>
</protein>
<gene>
    <name evidence="1" type="primary">pyrC</name>
    <name type="ordered locus">Geob_3265</name>
</gene>
<keyword id="KW-0378">Hydrolase</keyword>
<keyword id="KW-0479">Metal-binding</keyword>
<keyword id="KW-0665">Pyrimidine biosynthesis</keyword>
<keyword id="KW-1185">Reference proteome</keyword>
<keyword id="KW-0862">Zinc</keyword>
<feature type="chain" id="PRO_1000193098" description="Dihydroorotase">
    <location>
        <begin position="1"/>
        <end position="425"/>
    </location>
</feature>
<feature type="active site" evidence="1">
    <location>
        <position position="306"/>
    </location>
</feature>
<feature type="binding site" evidence="1">
    <location>
        <position position="61"/>
    </location>
    <ligand>
        <name>Zn(2+)</name>
        <dbReference type="ChEBI" id="CHEBI:29105"/>
        <label>1</label>
    </ligand>
</feature>
<feature type="binding site" evidence="1">
    <location>
        <begin position="63"/>
        <end position="65"/>
    </location>
    <ligand>
        <name>substrate</name>
    </ligand>
</feature>
<feature type="binding site" evidence="1">
    <location>
        <position position="63"/>
    </location>
    <ligand>
        <name>Zn(2+)</name>
        <dbReference type="ChEBI" id="CHEBI:29105"/>
        <label>1</label>
    </ligand>
</feature>
<feature type="binding site" evidence="1">
    <location>
        <position position="95"/>
    </location>
    <ligand>
        <name>substrate</name>
    </ligand>
</feature>
<feature type="binding site" evidence="1">
    <location>
        <position position="153"/>
    </location>
    <ligand>
        <name>Zn(2+)</name>
        <dbReference type="ChEBI" id="CHEBI:29105"/>
        <label>1</label>
    </ligand>
</feature>
<feature type="binding site" evidence="1">
    <location>
        <position position="153"/>
    </location>
    <ligand>
        <name>Zn(2+)</name>
        <dbReference type="ChEBI" id="CHEBI:29105"/>
        <label>2</label>
    </ligand>
</feature>
<feature type="binding site" evidence="1">
    <location>
        <position position="180"/>
    </location>
    <ligand>
        <name>Zn(2+)</name>
        <dbReference type="ChEBI" id="CHEBI:29105"/>
        <label>2</label>
    </ligand>
</feature>
<feature type="binding site" evidence="1">
    <location>
        <position position="233"/>
    </location>
    <ligand>
        <name>Zn(2+)</name>
        <dbReference type="ChEBI" id="CHEBI:29105"/>
        <label>2</label>
    </ligand>
</feature>
<feature type="binding site" evidence="1">
    <location>
        <position position="279"/>
    </location>
    <ligand>
        <name>substrate</name>
    </ligand>
</feature>
<feature type="binding site" evidence="1">
    <location>
        <position position="306"/>
    </location>
    <ligand>
        <name>Zn(2+)</name>
        <dbReference type="ChEBI" id="CHEBI:29105"/>
        <label>1</label>
    </ligand>
</feature>
<feature type="binding site" evidence="1">
    <location>
        <position position="310"/>
    </location>
    <ligand>
        <name>substrate</name>
    </ligand>
</feature>
<dbReference type="EC" id="3.5.2.3" evidence="1"/>
<dbReference type="EMBL" id="CP001390">
    <property type="protein sequence ID" value="ACM21608.1"/>
    <property type="molecule type" value="Genomic_DNA"/>
</dbReference>
<dbReference type="RefSeq" id="WP_012648336.1">
    <property type="nucleotide sequence ID" value="NC_011979.1"/>
</dbReference>
<dbReference type="SMR" id="B9M4S4"/>
<dbReference type="STRING" id="316067.Geob_3265"/>
<dbReference type="KEGG" id="geo:Geob_3265"/>
<dbReference type="eggNOG" id="COG0044">
    <property type="taxonomic scope" value="Bacteria"/>
</dbReference>
<dbReference type="HOGENOM" id="CLU_015572_1_0_7"/>
<dbReference type="OrthoDB" id="9803027at2"/>
<dbReference type="UniPathway" id="UPA00070">
    <property type="reaction ID" value="UER00117"/>
</dbReference>
<dbReference type="Proteomes" id="UP000007721">
    <property type="component" value="Chromosome"/>
</dbReference>
<dbReference type="GO" id="GO:0005737">
    <property type="term" value="C:cytoplasm"/>
    <property type="evidence" value="ECO:0007669"/>
    <property type="project" value="TreeGrafter"/>
</dbReference>
<dbReference type="GO" id="GO:0004038">
    <property type="term" value="F:allantoinase activity"/>
    <property type="evidence" value="ECO:0007669"/>
    <property type="project" value="TreeGrafter"/>
</dbReference>
<dbReference type="GO" id="GO:0004151">
    <property type="term" value="F:dihydroorotase activity"/>
    <property type="evidence" value="ECO:0007669"/>
    <property type="project" value="UniProtKB-UniRule"/>
</dbReference>
<dbReference type="GO" id="GO:0008270">
    <property type="term" value="F:zinc ion binding"/>
    <property type="evidence" value="ECO:0007669"/>
    <property type="project" value="UniProtKB-UniRule"/>
</dbReference>
<dbReference type="GO" id="GO:0044205">
    <property type="term" value="P:'de novo' UMP biosynthetic process"/>
    <property type="evidence" value="ECO:0007669"/>
    <property type="project" value="UniProtKB-UniRule"/>
</dbReference>
<dbReference type="GO" id="GO:0006145">
    <property type="term" value="P:purine nucleobase catabolic process"/>
    <property type="evidence" value="ECO:0007669"/>
    <property type="project" value="TreeGrafter"/>
</dbReference>
<dbReference type="CDD" id="cd01317">
    <property type="entry name" value="DHOase_IIa"/>
    <property type="match status" value="1"/>
</dbReference>
<dbReference type="Gene3D" id="3.20.20.140">
    <property type="entry name" value="Metal-dependent hydrolases"/>
    <property type="match status" value="1"/>
</dbReference>
<dbReference type="Gene3D" id="2.30.40.10">
    <property type="entry name" value="Urease, subunit C, domain 1"/>
    <property type="match status" value="1"/>
</dbReference>
<dbReference type="HAMAP" id="MF_00220_B">
    <property type="entry name" value="PyrC_classI_B"/>
    <property type="match status" value="1"/>
</dbReference>
<dbReference type="InterPro" id="IPR006680">
    <property type="entry name" value="Amidohydro-rel"/>
</dbReference>
<dbReference type="InterPro" id="IPR004722">
    <property type="entry name" value="DHOase"/>
</dbReference>
<dbReference type="InterPro" id="IPR050138">
    <property type="entry name" value="DHOase/Allantoinase_Hydrolase"/>
</dbReference>
<dbReference type="InterPro" id="IPR002195">
    <property type="entry name" value="Dihydroorotase_CS"/>
</dbReference>
<dbReference type="InterPro" id="IPR011059">
    <property type="entry name" value="Metal-dep_hydrolase_composite"/>
</dbReference>
<dbReference type="InterPro" id="IPR032466">
    <property type="entry name" value="Metal_Hydrolase"/>
</dbReference>
<dbReference type="NCBIfam" id="TIGR00857">
    <property type="entry name" value="pyrC_multi"/>
    <property type="match status" value="1"/>
</dbReference>
<dbReference type="PANTHER" id="PTHR43668">
    <property type="entry name" value="ALLANTOINASE"/>
    <property type="match status" value="1"/>
</dbReference>
<dbReference type="PANTHER" id="PTHR43668:SF2">
    <property type="entry name" value="ALLANTOINASE"/>
    <property type="match status" value="1"/>
</dbReference>
<dbReference type="Pfam" id="PF01979">
    <property type="entry name" value="Amidohydro_1"/>
    <property type="match status" value="1"/>
</dbReference>
<dbReference type="SUPFAM" id="SSF51338">
    <property type="entry name" value="Composite domain of metallo-dependent hydrolases"/>
    <property type="match status" value="1"/>
</dbReference>
<dbReference type="SUPFAM" id="SSF51556">
    <property type="entry name" value="Metallo-dependent hydrolases"/>
    <property type="match status" value="1"/>
</dbReference>
<dbReference type="PROSITE" id="PS00482">
    <property type="entry name" value="DIHYDROOROTASE_1"/>
    <property type="match status" value="1"/>
</dbReference>
<dbReference type="PROSITE" id="PS00483">
    <property type="entry name" value="DIHYDROOROTASE_2"/>
    <property type="match status" value="1"/>
</dbReference>
<comment type="function">
    <text evidence="1">Catalyzes the reversible cyclization of carbamoyl aspartate to dihydroorotate.</text>
</comment>
<comment type="catalytic activity">
    <reaction evidence="1">
        <text>(S)-dihydroorotate + H2O = N-carbamoyl-L-aspartate + H(+)</text>
        <dbReference type="Rhea" id="RHEA:24296"/>
        <dbReference type="ChEBI" id="CHEBI:15377"/>
        <dbReference type="ChEBI" id="CHEBI:15378"/>
        <dbReference type="ChEBI" id="CHEBI:30864"/>
        <dbReference type="ChEBI" id="CHEBI:32814"/>
        <dbReference type="EC" id="3.5.2.3"/>
    </reaction>
</comment>
<comment type="cofactor">
    <cofactor evidence="1">
        <name>Zn(2+)</name>
        <dbReference type="ChEBI" id="CHEBI:29105"/>
    </cofactor>
    <text evidence="1">Binds 2 Zn(2+) ions per subunit.</text>
</comment>
<comment type="pathway">
    <text evidence="1">Pyrimidine metabolism; UMP biosynthesis via de novo pathway; (S)-dihydroorotate from bicarbonate: step 3/3.</text>
</comment>
<comment type="similarity">
    <text evidence="1">Belongs to the metallo-dependent hydrolases superfamily. DHOase family. Class I DHOase subfamily.</text>
</comment>
<sequence length="425" mass="45169">MNIFIKGGRVIDPSQNIDETLDLLVVAGRIKELGKGLKAPADAEVIDAAGLLVTPGLIDMHVHLRDPGLEYKEDVITGTMAAAAGGFTSVACMPNTKPVNDNKAITSYIVNKAKAEALVNVFPVGAITQGSKGENLAEMGELKEAGCVAVSDDGRPVVNAELMRRALEYAKGMGVMVIAHSEELALVGEGVMNEGFTATELGLKGIPWAAEDVAVARDVYLAEFTNSPIHIAHISTKGSVRIIRDAKARGVQVTCETAPHYFSLTDDAVRGYETNAKMNPPLREAEDVAAIKTGLADGTIDAIATDHAPHHLDEKDVEFNVALNGIIGLETSLPLSLKLVEEKVLDMKTLVEKMAVRPAQILGLDRGTLKTGAPADVTIIDPKAEWVVEAEKLASKSKNSPFLGRKMTGAAAYTIVDGKVVHKRD</sequence>
<proteinExistence type="inferred from homology"/>
<organism>
    <name type="scientific">Geotalea daltonii (strain DSM 22248 / JCM 15807 / FRC-32)</name>
    <name type="common">Geobacter daltonii</name>
    <dbReference type="NCBI Taxonomy" id="316067"/>
    <lineage>
        <taxon>Bacteria</taxon>
        <taxon>Pseudomonadati</taxon>
        <taxon>Thermodesulfobacteriota</taxon>
        <taxon>Desulfuromonadia</taxon>
        <taxon>Geobacterales</taxon>
        <taxon>Geobacteraceae</taxon>
        <taxon>Geotalea</taxon>
    </lineage>
</organism>
<evidence type="ECO:0000255" key="1">
    <source>
        <dbReference type="HAMAP-Rule" id="MF_00220"/>
    </source>
</evidence>
<reference key="1">
    <citation type="submission" date="2009-01" db="EMBL/GenBank/DDBJ databases">
        <title>Complete sequence of Geobacter sp. FRC-32.</title>
        <authorList>
            <consortium name="US DOE Joint Genome Institute"/>
            <person name="Lucas S."/>
            <person name="Copeland A."/>
            <person name="Lapidus A."/>
            <person name="Glavina del Rio T."/>
            <person name="Dalin E."/>
            <person name="Tice H."/>
            <person name="Bruce D."/>
            <person name="Goodwin L."/>
            <person name="Pitluck S."/>
            <person name="Saunders E."/>
            <person name="Brettin T."/>
            <person name="Detter J.C."/>
            <person name="Han C."/>
            <person name="Larimer F."/>
            <person name="Land M."/>
            <person name="Hauser L."/>
            <person name="Kyrpides N."/>
            <person name="Ovchinnikova G."/>
            <person name="Kostka J."/>
            <person name="Richardson P."/>
        </authorList>
    </citation>
    <scope>NUCLEOTIDE SEQUENCE [LARGE SCALE GENOMIC DNA]</scope>
    <source>
        <strain>DSM 22248 / JCM 15807 / FRC-32</strain>
    </source>
</reference>
<name>PYRC_GEODF</name>
<accession>B9M4S4</accession>